<evidence type="ECO:0000255" key="1">
    <source>
        <dbReference type="HAMAP-Rule" id="MF_01147"/>
    </source>
</evidence>
<sequence>MLLGSVPQLDRVAVQLGPFPVYWYGIIIGTGVLLGLWLATREGERLGIPKDTFVDLVLIAVPIAILFARMYYVIFEWEYYAQNPSQIINIRQGGLAIHGGLIGAVVTGILFAKRRGVSFWKLADIAAPSILLGQAIGRWGNFMNQEAHGDEVTRQFLEGLHLPDFIINQMYIDGVYYHPTFLYESLWNFAGVILLLALRKVNLRRGELFFTYLIWYSIGRFFVEGLRTDSLMLGPLRIAQVMSIGLVVISIIFIIVRRKMGQADKRYSEN</sequence>
<feature type="chain" id="PRO_1000164122" description="Phosphatidylglycerol--prolipoprotein diacylglyceryl transferase">
    <location>
        <begin position="1"/>
        <end position="270"/>
    </location>
</feature>
<feature type="transmembrane region" description="Helical" evidence="1">
    <location>
        <begin position="19"/>
        <end position="39"/>
    </location>
</feature>
<feature type="transmembrane region" description="Helical" evidence="1">
    <location>
        <begin position="56"/>
        <end position="76"/>
    </location>
</feature>
<feature type="transmembrane region" description="Helical" evidence="1">
    <location>
        <begin position="92"/>
        <end position="112"/>
    </location>
</feature>
<feature type="transmembrane region" description="Helical" evidence="1">
    <location>
        <begin position="116"/>
        <end position="136"/>
    </location>
</feature>
<feature type="transmembrane region" description="Helical" evidence="1">
    <location>
        <begin position="178"/>
        <end position="198"/>
    </location>
</feature>
<feature type="transmembrane region" description="Helical" evidence="1">
    <location>
        <begin position="206"/>
        <end position="226"/>
    </location>
</feature>
<feature type="transmembrane region" description="Helical" evidence="1">
    <location>
        <begin position="236"/>
        <end position="256"/>
    </location>
</feature>
<feature type="binding site" evidence="1">
    <location>
        <position position="138"/>
    </location>
    <ligand>
        <name>a 1,2-diacyl-sn-glycero-3-phospho-(1'-sn-glycerol)</name>
        <dbReference type="ChEBI" id="CHEBI:64716"/>
    </ligand>
</feature>
<gene>
    <name evidence="1" type="primary">lgt</name>
    <name type="ordered locus">BAA_5421</name>
</gene>
<proteinExistence type="inferred from homology"/>
<comment type="function">
    <text evidence="1">Catalyzes the transfer of the diacylglyceryl group from phosphatidylglycerol to the sulfhydryl group of the N-terminal cysteine of a prolipoprotein, the first step in the formation of mature lipoproteins.</text>
</comment>
<comment type="catalytic activity">
    <reaction evidence="1">
        <text>L-cysteinyl-[prolipoprotein] + a 1,2-diacyl-sn-glycero-3-phospho-(1'-sn-glycerol) = an S-1,2-diacyl-sn-glyceryl-L-cysteinyl-[prolipoprotein] + sn-glycerol 1-phosphate + H(+)</text>
        <dbReference type="Rhea" id="RHEA:56712"/>
        <dbReference type="Rhea" id="RHEA-COMP:14679"/>
        <dbReference type="Rhea" id="RHEA-COMP:14680"/>
        <dbReference type="ChEBI" id="CHEBI:15378"/>
        <dbReference type="ChEBI" id="CHEBI:29950"/>
        <dbReference type="ChEBI" id="CHEBI:57685"/>
        <dbReference type="ChEBI" id="CHEBI:64716"/>
        <dbReference type="ChEBI" id="CHEBI:140658"/>
        <dbReference type="EC" id="2.5.1.145"/>
    </reaction>
</comment>
<comment type="pathway">
    <text evidence="1">Protein modification; lipoprotein biosynthesis (diacylglyceryl transfer).</text>
</comment>
<comment type="subcellular location">
    <subcellularLocation>
        <location evidence="1">Cell membrane</location>
        <topology evidence="1">Multi-pass membrane protein</topology>
    </subcellularLocation>
</comment>
<comment type="similarity">
    <text evidence="1">Belongs to the Lgt family.</text>
</comment>
<name>LGT_BACAA</name>
<organism>
    <name type="scientific">Bacillus anthracis (strain A0248)</name>
    <dbReference type="NCBI Taxonomy" id="592021"/>
    <lineage>
        <taxon>Bacteria</taxon>
        <taxon>Bacillati</taxon>
        <taxon>Bacillota</taxon>
        <taxon>Bacilli</taxon>
        <taxon>Bacillales</taxon>
        <taxon>Bacillaceae</taxon>
        <taxon>Bacillus</taxon>
        <taxon>Bacillus cereus group</taxon>
    </lineage>
</organism>
<accession>C3P0C9</accession>
<reference key="1">
    <citation type="submission" date="2009-04" db="EMBL/GenBank/DDBJ databases">
        <title>Genome sequence of Bacillus anthracis A0248.</title>
        <authorList>
            <person name="Dodson R.J."/>
            <person name="Munk A.C."/>
            <person name="Bruce D."/>
            <person name="Detter C."/>
            <person name="Tapia R."/>
            <person name="Sutton G."/>
            <person name="Sims D."/>
            <person name="Brettin T."/>
        </authorList>
    </citation>
    <scope>NUCLEOTIDE SEQUENCE [LARGE SCALE GENOMIC DNA]</scope>
    <source>
        <strain>A0248</strain>
    </source>
</reference>
<keyword id="KW-1003">Cell membrane</keyword>
<keyword id="KW-0472">Membrane</keyword>
<keyword id="KW-0808">Transferase</keyword>
<keyword id="KW-0812">Transmembrane</keyword>
<keyword id="KW-1133">Transmembrane helix</keyword>
<dbReference type="EC" id="2.5.1.145" evidence="1"/>
<dbReference type="EMBL" id="CP001598">
    <property type="protein sequence ID" value="ACQ49491.1"/>
    <property type="molecule type" value="Genomic_DNA"/>
</dbReference>
<dbReference type="RefSeq" id="WP_000924244.1">
    <property type="nucleotide sequence ID" value="NC_012659.1"/>
</dbReference>
<dbReference type="SMR" id="C3P0C9"/>
<dbReference type="GeneID" id="45024994"/>
<dbReference type="KEGG" id="bai:BAA_5421"/>
<dbReference type="HOGENOM" id="CLU_013386_1_2_9"/>
<dbReference type="UniPathway" id="UPA00664"/>
<dbReference type="GO" id="GO:0005886">
    <property type="term" value="C:plasma membrane"/>
    <property type="evidence" value="ECO:0007669"/>
    <property type="project" value="UniProtKB-SubCell"/>
</dbReference>
<dbReference type="GO" id="GO:0008961">
    <property type="term" value="F:phosphatidylglycerol-prolipoprotein diacylglyceryl transferase activity"/>
    <property type="evidence" value="ECO:0007669"/>
    <property type="project" value="UniProtKB-UniRule"/>
</dbReference>
<dbReference type="GO" id="GO:0042158">
    <property type="term" value="P:lipoprotein biosynthetic process"/>
    <property type="evidence" value="ECO:0007669"/>
    <property type="project" value="UniProtKB-UniRule"/>
</dbReference>
<dbReference type="HAMAP" id="MF_01147">
    <property type="entry name" value="Lgt"/>
    <property type="match status" value="1"/>
</dbReference>
<dbReference type="InterPro" id="IPR001640">
    <property type="entry name" value="Lgt"/>
</dbReference>
<dbReference type="NCBIfam" id="TIGR00544">
    <property type="entry name" value="lgt"/>
    <property type="match status" value="1"/>
</dbReference>
<dbReference type="PANTHER" id="PTHR30589:SF0">
    <property type="entry name" value="PHOSPHATIDYLGLYCEROL--PROLIPOPROTEIN DIACYLGLYCERYL TRANSFERASE"/>
    <property type="match status" value="1"/>
</dbReference>
<dbReference type="PANTHER" id="PTHR30589">
    <property type="entry name" value="PROLIPOPROTEIN DIACYLGLYCERYL TRANSFERASE"/>
    <property type="match status" value="1"/>
</dbReference>
<dbReference type="Pfam" id="PF01790">
    <property type="entry name" value="LGT"/>
    <property type="match status" value="1"/>
</dbReference>
<dbReference type="PROSITE" id="PS01311">
    <property type="entry name" value="LGT"/>
    <property type="match status" value="1"/>
</dbReference>
<protein>
    <recommendedName>
        <fullName evidence="1">Phosphatidylglycerol--prolipoprotein diacylglyceryl transferase</fullName>
        <ecNumber evidence="1">2.5.1.145</ecNumber>
    </recommendedName>
</protein>